<organismHost>
    <name type="scientific">Acanthamoeba polyphaga</name>
    <name type="common">Amoeba</name>
    <dbReference type="NCBI Taxonomy" id="5757"/>
</organismHost>
<protein>
    <recommendedName>
        <fullName>Uncharacterized protein L334</fullName>
    </recommendedName>
</protein>
<feature type="initiator methionine" description="Removed" evidence="1">
    <location>
        <position position="1"/>
    </location>
</feature>
<feature type="chain" id="PRO_0000071268" description="Uncharacterized protein L334">
    <location>
        <begin position="2"/>
        <end position="187"/>
    </location>
</feature>
<feature type="lipid moiety-binding region" description="N-myristoyl glycine; by host" evidence="1">
    <location>
        <position position="2"/>
    </location>
</feature>
<proteinExistence type="inferred from homology"/>
<organism>
    <name type="scientific">Acanthamoeba polyphaga mimivirus</name>
    <name type="common">APMV</name>
    <dbReference type="NCBI Taxonomy" id="212035"/>
    <lineage>
        <taxon>Viruses</taxon>
        <taxon>Varidnaviria</taxon>
        <taxon>Bamfordvirae</taxon>
        <taxon>Nucleocytoviricota</taxon>
        <taxon>Megaviricetes</taxon>
        <taxon>Imitervirales</taxon>
        <taxon>Mimiviridae</taxon>
        <taxon>Megamimivirinae</taxon>
        <taxon>Mimivirus</taxon>
        <taxon>Mimivirus bradfordmassiliense</taxon>
    </lineage>
</organism>
<accession>Q5UQR9</accession>
<comment type="similarity">
    <text evidence="2">Belongs to the mimivirus L332/L333/L334 family.</text>
</comment>
<reference key="1">
    <citation type="journal article" date="2004" name="Science">
        <title>The 1.2-megabase genome sequence of Mimivirus.</title>
        <authorList>
            <person name="Raoult D."/>
            <person name="Audic S."/>
            <person name="Robert C."/>
            <person name="Abergel C."/>
            <person name="Renesto P."/>
            <person name="Ogata H."/>
            <person name="La Scola B."/>
            <person name="Susan M."/>
            <person name="Claverie J.-M."/>
        </authorList>
    </citation>
    <scope>NUCLEOTIDE SEQUENCE [LARGE SCALE GENOMIC DNA]</scope>
    <source>
        <strain>Rowbotham-Bradford</strain>
    </source>
</reference>
<sequence length="187" mass="22422">MGVGFGYTEYTDTFNRKYVNNVINFKKTQIKDSVKTKLSDIISKGYSYNKYIKICKYSVEALEIVKKCLFCKNFLCKIKVFKRIKKHIHVKFFHNDYVDKIKEKFNKLVNKSLKKQINHVCLNSEISLKKKLKVLCLTHNYNIIFEDYGYNFKCKVYGWHVYKKRLDFGNEENVKNGKYCIFTMLEY</sequence>
<dbReference type="EMBL" id="AY653733">
    <property type="protein sequence ID" value="AAV50603.1"/>
    <property type="molecule type" value="Genomic_DNA"/>
</dbReference>
<dbReference type="SMR" id="Q5UQR9"/>
<dbReference type="KEGG" id="vg:9924952"/>
<dbReference type="Proteomes" id="UP000001134">
    <property type="component" value="Genome"/>
</dbReference>
<dbReference type="InterPro" id="IPR043845">
    <property type="entry name" value="DUF5864"/>
</dbReference>
<dbReference type="Pfam" id="PF19182">
    <property type="entry name" value="DUF5864"/>
    <property type="match status" value="1"/>
</dbReference>
<name>YL334_MIMIV</name>
<evidence type="ECO:0000255" key="1"/>
<evidence type="ECO:0000305" key="2"/>
<keyword id="KW-0449">Lipoprotein</keyword>
<keyword id="KW-0519">Myristate</keyword>
<keyword id="KW-1185">Reference proteome</keyword>
<gene>
    <name type="ordered locus">MIMI_L334</name>
</gene>